<evidence type="ECO:0000250" key="1"/>
<evidence type="ECO:0000256" key="2">
    <source>
        <dbReference type="SAM" id="MobiDB-lite"/>
    </source>
</evidence>
<evidence type="ECO:0000305" key="3"/>
<dbReference type="EMBL" id="BC045482">
    <property type="protein sequence ID" value="AAH45482.1"/>
    <property type="molecule type" value="mRNA"/>
</dbReference>
<dbReference type="RefSeq" id="NP_956474.1">
    <property type="nucleotide sequence ID" value="NM_200180.1"/>
</dbReference>
<dbReference type="SMR" id="Q7ZVM9"/>
<dbReference type="FunCoup" id="Q7ZVM9">
    <property type="interactions" value="541"/>
</dbReference>
<dbReference type="STRING" id="7955.ENSDARP00000060656"/>
<dbReference type="PaxDb" id="7955-ENSDARP00000060656"/>
<dbReference type="GeneID" id="393149"/>
<dbReference type="KEGG" id="dre:393149"/>
<dbReference type="AGR" id="ZFIN:ZDB-GENE-040426-829"/>
<dbReference type="CTD" id="80010"/>
<dbReference type="ZFIN" id="ZDB-GENE-040426-829">
    <property type="gene designation" value="rmi1"/>
</dbReference>
<dbReference type="eggNOG" id="KOG3683">
    <property type="taxonomic scope" value="Eukaryota"/>
</dbReference>
<dbReference type="InParanoid" id="Q7ZVM9"/>
<dbReference type="OrthoDB" id="341511at2759"/>
<dbReference type="PhylomeDB" id="Q7ZVM9"/>
<dbReference type="PRO" id="PR:Q7ZVM9"/>
<dbReference type="Proteomes" id="UP000000437">
    <property type="component" value="Chromosome 8"/>
</dbReference>
<dbReference type="GO" id="GO:0016604">
    <property type="term" value="C:nuclear body"/>
    <property type="evidence" value="ECO:0000318"/>
    <property type="project" value="GO_Central"/>
</dbReference>
<dbReference type="GO" id="GO:0031422">
    <property type="term" value="C:RecQ family helicase-topoisomerase III complex"/>
    <property type="evidence" value="ECO:0000318"/>
    <property type="project" value="GO_Central"/>
</dbReference>
<dbReference type="GO" id="GO:0000166">
    <property type="term" value="F:nucleotide binding"/>
    <property type="evidence" value="ECO:0007669"/>
    <property type="project" value="InterPro"/>
</dbReference>
<dbReference type="GO" id="GO:0006260">
    <property type="term" value="P:DNA replication"/>
    <property type="evidence" value="ECO:0007669"/>
    <property type="project" value="UniProtKB-KW"/>
</dbReference>
<dbReference type="GO" id="GO:0000724">
    <property type="term" value="P:double-strand break repair via homologous recombination"/>
    <property type="evidence" value="ECO:0000318"/>
    <property type="project" value="GO_Central"/>
</dbReference>
<dbReference type="GO" id="GO:0000712">
    <property type="term" value="P:resolution of meiotic recombination intermediates"/>
    <property type="evidence" value="ECO:0000318"/>
    <property type="project" value="GO_Central"/>
</dbReference>
<dbReference type="FunFam" id="1.10.8.1020:FF:000001">
    <property type="entry name" value="RecQ-mediated genome instability protein 1"/>
    <property type="match status" value="1"/>
</dbReference>
<dbReference type="FunFam" id="2.40.50.770:FF:000002">
    <property type="entry name" value="recQ-mediated genome instability protein 1"/>
    <property type="match status" value="1"/>
</dbReference>
<dbReference type="Gene3D" id="2.40.50.510">
    <property type="match status" value="1"/>
</dbReference>
<dbReference type="Gene3D" id="1.10.8.1020">
    <property type="entry name" value="RecQ-mediated genome instability protein 1, N-terminal domain"/>
    <property type="match status" value="1"/>
</dbReference>
<dbReference type="Gene3D" id="2.40.50.770">
    <property type="entry name" value="RecQ-mediated genome instability protein Rmi1, C-terminal domain"/>
    <property type="match status" value="1"/>
</dbReference>
<dbReference type="InterPro" id="IPR032199">
    <property type="entry name" value="RMI1_C"/>
</dbReference>
<dbReference type="InterPro" id="IPR049363">
    <property type="entry name" value="RMI1_N"/>
</dbReference>
<dbReference type="InterPro" id="IPR042470">
    <property type="entry name" value="RMI1_N_C_sf"/>
</dbReference>
<dbReference type="InterPro" id="IPR044881">
    <property type="entry name" value="RMI1_N_N_sf"/>
</dbReference>
<dbReference type="InterPro" id="IPR013894">
    <property type="entry name" value="RMI1_OB"/>
</dbReference>
<dbReference type="PANTHER" id="PTHR14790:SF15">
    <property type="entry name" value="RECQ-MEDIATED GENOME INSTABILITY PROTEIN 1"/>
    <property type="match status" value="1"/>
</dbReference>
<dbReference type="PANTHER" id="PTHR14790">
    <property type="entry name" value="RECQ-MEDIATED GENOME INSTABILITY PROTEIN 1 RMI1"/>
    <property type="match status" value="1"/>
</dbReference>
<dbReference type="Pfam" id="PF16099">
    <property type="entry name" value="RMI1_C"/>
    <property type="match status" value="1"/>
</dbReference>
<dbReference type="Pfam" id="PF08585">
    <property type="entry name" value="RMI1_N_C"/>
    <property type="match status" value="1"/>
</dbReference>
<dbReference type="Pfam" id="PF21000">
    <property type="entry name" value="RMI1_N_N"/>
    <property type="match status" value="1"/>
</dbReference>
<dbReference type="SMART" id="SM01161">
    <property type="entry name" value="DUF1767"/>
    <property type="match status" value="1"/>
</dbReference>
<comment type="function">
    <text evidence="1">Essential component of the RMI complex, a complex that plays an important role in the processing of homologous recombination intermediates to limit DNA crossover formation in cells. Promotes TOP3A binding to double Holliday junctions (DHJ) and hence stimulates TOP3A-mediated dissolution. Required for BLM phosphorylation during mitosis. Within the BLM complex, required for BLM and TOP3A stability (By similarity).</text>
</comment>
<comment type="subunit">
    <text evidence="1">Component of the RMI complex, containing at least TOP3A, RMI1 and RMI2.</text>
</comment>
<comment type="subcellular location">
    <subcellularLocation>
        <location evidence="1">Nucleus</location>
    </subcellularLocation>
</comment>
<comment type="similarity">
    <text evidence="3">Belongs to the RMI1 family.</text>
</comment>
<reference key="1">
    <citation type="submission" date="2003-01" db="EMBL/GenBank/DDBJ databases">
        <authorList>
            <consortium name="NIH - Zebrafish Gene Collection (ZGC) project"/>
        </authorList>
    </citation>
    <scope>NUCLEOTIDE SEQUENCE [LARGE SCALE MRNA]</scope>
    <source>
        <strain>AB</strain>
    </source>
</reference>
<organism>
    <name type="scientific">Danio rerio</name>
    <name type="common">Zebrafish</name>
    <name type="synonym">Brachydanio rerio</name>
    <dbReference type="NCBI Taxonomy" id="7955"/>
    <lineage>
        <taxon>Eukaryota</taxon>
        <taxon>Metazoa</taxon>
        <taxon>Chordata</taxon>
        <taxon>Craniata</taxon>
        <taxon>Vertebrata</taxon>
        <taxon>Euteleostomi</taxon>
        <taxon>Actinopterygii</taxon>
        <taxon>Neopterygii</taxon>
        <taxon>Teleostei</taxon>
        <taxon>Ostariophysi</taxon>
        <taxon>Cypriniformes</taxon>
        <taxon>Danionidae</taxon>
        <taxon>Danioninae</taxon>
        <taxon>Danio</taxon>
    </lineage>
</organism>
<sequence>MSVGEVQVIQAWLRSEWHIQVPPAWLDACVNWIKEEADRASIPQSQLNQRVLEQWLLTDLRDLAHPVLPERISEAQKTVLSNRCCVQMDSLLDVSQPAYNQLQRIRGTDCSNDQVSAVTQETQRPWEAKPTRMLMLQLTDGVQNLEGMEYRPIPALNANLPPGTKLQLVGPIAVRLGVLLLKAENIKVLGGEVEQLLEIHSQSRVLCGTLGLPEETHPQQEPDGLVASVADSGYSSLASEASLRHPQSQPLPQISRQDDWDMDEIPDDDFRSIPDHFDDLPQNNNPLEDVPEDFDDIPLDELDNVMCPIDVEVSAGTLEDPERNKHDSSLLNGSKPEEVSFPSRSRLGNTYQSRTLNKVPNTSLASCSTSTLDSSACKETPMYLCSLQAGCWPPKSPQVFRLQAFIVTLVGNLRISGGVWKLGATISDGSGYLDVDLSDNMLSELIGFSAAETRVLRKDLARRGEVDSGIQHCQRELVDMCCMMSVQVDLTGRGVVLSASPISDRECSEMQKRVKEARR</sequence>
<accession>Q7ZVM9</accession>
<protein>
    <recommendedName>
        <fullName>RecQ-mediated genome instability protein 1</fullName>
    </recommendedName>
</protein>
<gene>
    <name type="primary">rmi1</name>
    <name type="ORF">zgc:55882</name>
</gene>
<name>RMI1_DANRE</name>
<keyword id="KW-0235">DNA replication</keyword>
<keyword id="KW-0539">Nucleus</keyword>
<keyword id="KW-1185">Reference proteome</keyword>
<proteinExistence type="evidence at transcript level"/>
<feature type="chain" id="PRO_0000361551" description="RecQ-mediated genome instability protein 1">
    <location>
        <begin position="1"/>
        <end position="519"/>
    </location>
</feature>
<feature type="region of interest" description="Disordered" evidence="2">
    <location>
        <begin position="238"/>
        <end position="263"/>
    </location>
</feature>
<feature type="region of interest" description="Disordered" evidence="2">
    <location>
        <begin position="314"/>
        <end position="353"/>
    </location>
</feature>
<feature type="compositionally biased region" description="Polar residues" evidence="2">
    <location>
        <begin position="238"/>
        <end position="255"/>
    </location>
</feature>
<feature type="compositionally biased region" description="Polar residues" evidence="2">
    <location>
        <begin position="342"/>
        <end position="353"/>
    </location>
</feature>